<proteinExistence type="inferred from homology"/>
<evidence type="ECO:0000255" key="1">
    <source>
        <dbReference type="HAMAP-Rule" id="MF_01338"/>
    </source>
</evidence>
<organism>
    <name type="scientific">Drosera capensis</name>
    <name type="common">Cape sundew</name>
    <dbReference type="NCBI Taxonomy" id="4366"/>
    <lineage>
        <taxon>Eukaryota</taxon>
        <taxon>Viridiplantae</taxon>
        <taxon>Streptophyta</taxon>
        <taxon>Embryophyta</taxon>
        <taxon>Tracheophyta</taxon>
        <taxon>Spermatophyta</taxon>
        <taxon>Magnoliopsida</taxon>
        <taxon>eudicotyledons</taxon>
        <taxon>Gunneridae</taxon>
        <taxon>Pentapetalae</taxon>
        <taxon>Caryophyllales</taxon>
        <taxon>Droseraceae</taxon>
        <taxon>Drosera</taxon>
    </lineage>
</organism>
<name>RBL_DROCA</name>
<geneLocation type="chloroplast"/>
<accession>P28405</accession>
<gene>
    <name evidence="1" type="primary">rbcL</name>
</gene>
<protein>
    <recommendedName>
        <fullName evidence="1">Ribulose bisphosphate carboxylase large chain</fullName>
        <shortName evidence="1">RuBisCO large subunit</shortName>
        <ecNumber evidence="1">4.1.1.39</ecNumber>
    </recommendedName>
</protein>
<reference key="1">
    <citation type="journal article" date="1992" name="Science">
        <title>Carnivorous plants: phylogeny and structural evolution.</title>
        <authorList>
            <person name="Albert V.A."/>
            <person name="Williams S.E."/>
            <person name="Chase M.W."/>
        </authorList>
    </citation>
    <scope>NUCLEOTIDE SEQUENCE [GENOMIC DNA]</scope>
</reference>
<sequence length="466" mass="51677">GVGFKAGVKDYKLTYYTPEYQTLDTDILAAFRVTPQPGVPPEEAGTAVAAESSTGTWTTVWTDGLTSLDRYKGRCYHIEPVSGEENQFIVYVAYPLDLFEEGSVTNMFTSIVGNVFGFKALRALRLEDLRIPPAYSKTFQGPPHGIQVERDKLNKYGRPLLGCTIKPKLGLSAKNYGRAVYECLRGGLDFTKDDENVNSQPFMRWRDRFLFCAEALYKAQAETGEIKGHYLNATAGTCEEMIKRAVFARELGVPIVMHDYLTGGFTANTSLAHYCRDNGLLLHIHRAMHAVIDRQKNHGIDFRVLAKALRMSGGDHIHSGTVVGKLEGERDITLGFVVLLRDDFIEKDRSRGIYFTQPWVSLPGVLPVASGGIHVWHMPALTEIFGDDSVLQFGGGTLGHPWGNPPGAAANRVALEACVQARNHGQDLAREGNDVIRRASKWSPELSSACEVWKEIKLYFEAMDTL</sequence>
<comment type="function">
    <text evidence="1">RuBisCO catalyzes two reactions: the carboxylation of D-ribulose 1,5-bisphosphate, the primary event in carbon dioxide fixation, as well as the oxidative fragmentation of the pentose substrate in the photorespiration process. Both reactions occur simultaneously and in competition at the same active site.</text>
</comment>
<comment type="catalytic activity">
    <reaction evidence="1">
        <text>2 (2R)-3-phosphoglycerate + 2 H(+) = D-ribulose 1,5-bisphosphate + CO2 + H2O</text>
        <dbReference type="Rhea" id="RHEA:23124"/>
        <dbReference type="ChEBI" id="CHEBI:15377"/>
        <dbReference type="ChEBI" id="CHEBI:15378"/>
        <dbReference type="ChEBI" id="CHEBI:16526"/>
        <dbReference type="ChEBI" id="CHEBI:57870"/>
        <dbReference type="ChEBI" id="CHEBI:58272"/>
        <dbReference type="EC" id="4.1.1.39"/>
    </reaction>
</comment>
<comment type="catalytic activity">
    <reaction evidence="1">
        <text>D-ribulose 1,5-bisphosphate + O2 = 2-phosphoglycolate + (2R)-3-phosphoglycerate + 2 H(+)</text>
        <dbReference type="Rhea" id="RHEA:36631"/>
        <dbReference type="ChEBI" id="CHEBI:15378"/>
        <dbReference type="ChEBI" id="CHEBI:15379"/>
        <dbReference type="ChEBI" id="CHEBI:57870"/>
        <dbReference type="ChEBI" id="CHEBI:58033"/>
        <dbReference type="ChEBI" id="CHEBI:58272"/>
    </reaction>
</comment>
<comment type="cofactor">
    <cofactor evidence="1">
        <name>Mg(2+)</name>
        <dbReference type="ChEBI" id="CHEBI:18420"/>
    </cofactor>
    <text evidence="1">Binds 1 Mg(2+) ion per subunit.</text>
</comment>
<comment type="subunit">
    <text evidence="1">Heterohexadecamer of 8 large chains and 8 small chains; disulfide-linked. The disulfide link is formed within the large subunit homodimers.</text>
</comment>
<comment type="subcellular location">
    <subcellularLocation>
        <location>Plastid</location>
        <location>Chloroplast</location>
    </subcellularLocation>
</comment>
<comment type="PTM">
    <text evidence="1">The disulfide bond which can form in the large chain dimeric partners within the hexadecamer appears to be associated with oxidative stress and protein turnover.</text>
</comment>
<comment type="miscellaneous">
    <text evidence="1">The basic functional RuBisCO is composed of a large chain homodimer in a 'head-to-tail' conformation. In form I RuBisCO this homodimer is arranged in a barrel-like tetramer with the small subunits forming a tetrameric 'cap' on each end of the 'barrel'.</text>
</comment>
<comment type="similarity">
    <text evidence="1">Belongs to the RuBisCO large chain family. Type I subfamily.</text>
</comment>
<feature type="chain" id="PRO_0000062448" description="Ribulose bisphosphate carboxylase large chain">
    <location>
        <begin position="1" status="less than"/>
        <end position="466"/>
    </location>
</feature>
<feature type="active site" description="Proton acceptor" evidence="1">
    <location>
        <position position="166"/>
    </location>
</feature>
<feature type="active site" description="Proton acceptor" evidence="1">
    <location>
        <position position="285"/>
    </location>
</feature>
<feature type="binding site" description="in homodimeric partner" evidence="1">
    <location>
        <position position="114"/>
    </location>
    <ligand>
        <name>substrate</name>
    </ligand>
</feature>
<feature type="binding site" evidence="1">
    <location>
        <position position="164"/>
    </location>
    <ligand>
        <name>substrate</name>
    </ligand>
</feature>
<feature type="binding site" evidence="1">
    <location>
        <position position="168"/>
    </location>
    <ligand>
        <name>substrate</name>
    </ligand>
</feature>
<feature type="binding site" description="via carbamate group" evidence="1">
    <location>
        <position position="192"/>
    </location>
    <ligand>
        <name>Mg(2+)</name>
        <dbReference type="ChEBI" id="CHEBI:18420"/>
    </ligand>
</feature>
<feature type="binding site" evidence="1">
    <location>
        <position position="194"/>
    </location>
    <ligand>
        <name>Mg(2+)</name>
        <dbReference type="ChEBI" id="CHEBI:18420"/>
    </ligand>
</feature>
<feature type="binding site" evidence="1">
    <location>
        <position position="195"/>
    </location>
    <ligand>
        <name>Mg(2+)</name>
        <dbReference type="ChEBI" id="CHEBI:18420"/>
    </ligand>
</feature>
<feature type="binding site" evidence="1">
    <location>
        <position position="286"/>
    </location>
    <ligand>
        <name>substrate</name>
    </ligand>
</feature>
<feature type="binding site" evidence="1">
    <location>
        <position position="318"/>
    </location>
    <ligand>
        <name>substrate</name>
    </ligand>
</feature>
<feature type="binding site" evidence="1">
    <location>
        <position position="370"/>
    </location>
    <ligand>
        <name>substrate</name>
    </ligand>
</feature>
<feature type="site" description="Transition state stabilizer" evidence="1">
    <location>
        <position position="325"/>
    </location>
</feature>
<feature type="modified residue" description="N6,N6,N6-trimethyllysine" evidence="1">
    <location>
        <position position="5"/>
    </location>
</feature>
<feature type="modified residue" description="N6-carboxylysine" evidence="1">
    <location>
        <position position="192"/>
    </location>
</feature>
<feature type="disulfide bond" description="Interchain; in linked form" evidence="1">
    <location>
        <position position="238"/>
    </location>
</feature>
<feature type="non-terminal residue">
    <location>
        <position position="1"/>
    </location>
</feature>
<keyword id="KW-0113">Calvin cycle</keyword>
<keyword id="KW-0120">Carbon dioxide fixation</keyword>
<keyword id="KW-0150">Chloroplast</keyword>
<keyword id="KW-1015">Disulfide bond</keyword>
<keyword id="KW-0456">Lyase</keyword>
<keyword id="KW-0460">Magnesium</keyword>
<keyword id="KW-0479">Metal-binding</keyword>
<keyword id="KW-0488">Methylation</keyword>
<keyword id="KW-0503">Monooxygenase</keyword>
<keyword id="KW-0560">Oxidoreductase</keyword>
<keyword id="KW-0601">Photorespiration</keyword>
<keyword id="KW-0602">Photosynthesis</keyword>
<keyword id="KW-0934">Plastid</keyword>
<dbReference type="EC" id="4.1.1.39" evidence="1"/>
<dbReference type="EMBL" id="L01909">
    <property type="protein sequence ID" value="AAA16237.2"/>
    <property type="molecule type" value="Genomic_DNA"/>
</dbReference>
<dbReference type="SMR" id="P28405"/>
<dbReference type="GO" id="GO:0009507">
    <property type="term" value="C:chloroplast"/>
    <property type="evidence" value="ECO:0007669"/>
    <property type="project" value="UniProtKB-SubCell"/>
</dbReference>
<dbReference type="GO" id="GO:0000287">
    <property type="term" value="F:magnesium ion binding"/>
    <property type="evidence" value="ECO:0007669"/>
    <property type="project" value="InterPro"/>
</dbReference>
<dbReference type="GO" id="GO:0004497">
    <property type="term" value="F:monooxygenase activity"/>
    <property type="evidence" value="ECO:0007669"/>
    <property type="project" value="UniProtKB-KW"/>
</dbReference>
<dbReference type="GO" id="GO:0016984">
    <property type="term" value="F:ribulose-bisphosphate carboxylase activity"/>
    <property type="evidence" value="ECO:0007669"/>
    <property type="project" value="UniProtKB-EC"/>
</dbReference>
<dbReference type="GO" id="GO:0009853">
    <property type="term" value="P:photorespiration"/>
    <property type="evidence" value="ECO:0007669"/>
    <property type="project" value="UniProtKB-KW"/>
</dbReference>
<dbReference type="GO" id="GO:0019253">
    <property type="term" value="P:reductive pentose-phosphate cycle"/>
    <property type="evidence" value="ECO:0007669"/>
    <property type="project" value="UniProtKB-KW"/>
</dbReference>
<dbReference type="CDD" id="cd08212">
    <property type="entry name" value="RuBisCO_large_I"/>
    <property type="match status" value="1"/>
</dbReference>
<dbReference type="FunFam" id="3.20.20.110:FF:000001">
    <property type="entry name" value="Ribulose bisphosphate carboxylase large chain"/>
    <property type="match status" value="1"/>
</dbReference>
<dbReference type="FunFam" id="3.30.70.150:FF:000001">
    <property type="entry name" value="Ribulose bisphosphate carboxylase large chain"/>
    <property type="match status" value="1"/>
</dbReference>
<dbReference type="Gene3D" id="3.20.20.110">
    <property type="entry name" value="Ribulose bisphosphate carboxylase, large subunit, C-terminal domain"/>
    <property type="match status" value="1"/>
</dbReference>
<dbReference type="Gene3D" id="3.30.70.150">
    <property type="entry name" value="RuBisCO large subunit, N-terminal domain"/>
    <property type="match status" value="1"/>
</dbReference>
<dbReference type="HAMAP" id="MF_01338">
    <property type="entry name" value="RuBisCO_L_type1"/>
    <property type="match status" value="1"/>
</dbReference>
<dbReference type="InterPro" id="IPR033966">
    <property type="entry name" value="RuBisCO"/>
</dbReference>
<dbReference type="InterPro" id="IPR020878">
    <property type="entry name" value="RuBisCo_large_chain_AS"/>
</dbReference>
<dbReference type="InterPro" id="IPR000685">
    <property type="entry name" value="RuBisCO_lsu_C"/>
</dbReference>
<dbReference type="InterPro" id="IPR036376">
    <property type="entry name" value="RuBisCO_lsu_C_sf"/>
</dbReference>
<dbReference type="InterPro" id="IPR017443">
    <property type="entry name" value="RuBisCO_lsu_fd_N"/>
</dbReference>
<dbReference type="InterPro" id="IPR036422">
    <property type="entry name" value="RuBisCO_lsu_N_sf"/>
</dbReference>
<dbReference type="InterPro" id="IPR020888">
    <property type="entry name" value="RuBisCO_lsuI"/>
</dbReference>
<dbReference type="NCBIfam" id="NF003252">
    <property type="entry name" value="PRK04208.1"/>
    <property type="match status" value="1"/>
</dbReference>
<dbReference type="PANTHER" id="PTHR42704">
    <property type="entry name" value="RIBULOSE BISPHOSPHATE CARBOXYLASE"/>
    <property type="match status" value="1"/>
</dbReference>
<dbReference type="PANTHER" id="PTHR42704:SF15">
    <property type="entry name" value="RIBULOSE BISPHOSPHATE CARBOXYLASE LARGE CHAIN"/>
    <property type="match status" value="1"/>
</dbReference>
<dbReference type="Pfam" id="PF00016">
    <property type="entry name" value="RuBisCO_large"/>
    <property type="match status" value="1"/>
</dbReference>
<dbReference type="Pfam" id="PF02788">
    <property type="entry name" value="RuBisCO_large_N"/>
    <property type="match status" value="1"/>
</dbReference>
<dbReference type="SFLD" id="SFLDG01052">
    <property type="entry name" value="RuBisCO"/>
    <property type="match status" value="1"/>
</dbReference>
<dbReference type="SFLD" id="SFLDS00014">
    <property type="entry name" value="RuBisCO"/>
    <property type="match status" value="1"/>
</dbReference>
<dbReference type="SFLD" id="SFLDG00301">
    <property type="entry name" value="RuBisCO-like_proteins"/>
    <property type="match status" value="1"/>
</dbReference>
<dbReference type="SUPFAM" id="SSF51649">
    <property type="entry name" value="RuBisCo, C-terminal domain"/>
    <property type="match status" value="1"/>
</dbReference>
<dbReference type="SUPFAM" id="SSF54966">
    <property type="entry name" value="RuBisCO, large subunit, small (N-terminal) domain"/>
    <property type="match status" value="1"/>
</dbReference>
<dbReference type="PROSITE" id="PS00157">
    <property type="entry name" value="RUBISCO_LARGE"/>
    <property type="match status" value="1"/>
</dbReference>